<proteinExistence type="inferred from homology"/>
<keyword id="KW-0067">ATP-binding</keyword>
<keyword id="KW-0963">Cytoplasm</keyword>
<keyword id="KW-0315">Glutamine amidotransferase</keyword>
<keyword id="KW-0378">Hydrolase</keyword>
<keyword id="KW-0436">Ligase</keyword>
<keyword id="KW-0547">Nucleotide-binding</keyword>
<keyword id="KW-0658">Purine biosynthesis</keyword>
<keyword id="KW-1185">Reference proteome</keyword>
<comment type="function">
    <text evidence="1">Part of the phosphoribosylformylglycinamidine synthase complex involved in the purines biosynthetic pathway. Catalyzes the ATP-dependent conversion of formylglycinamide ribonucleotide (FGAR) and glutamine to yield formylglycinamidine ribonucleotide (FGAM) and glutamate. The FGAM synthase complex is composed of three subunits. PurQ produces an ammonia molecule by converting glutamine to glutamate. PurL transfers the ammonia molecule to FGAR to form FGAM in an ATP-dependent manner. PurS interacts with PurQ and PurL and is thought to assist in the transfer of the ammonia molecule from PurQ to PurL.</text>
</comment>
<comment type="catalytic activity">
    <reaction evidence="1">
        <text>N(2)-formyl-N(1)-(5-phospho-beta-D-ribosyl)glycinamide + L-glutamine + ATP + H2O = 2-formamido-N(1)-(5-O-phospho-beta-D-ribosyl)acetamidine + L-glutamate + ADP + phosphate + H(+)</text>
        <dbReference type="Rhea" id="RHEA:17129"/>
        <dbReference type="ChEBI" id="CHEBI:15377"/>
        <dbReference type="ChEBI" id="CHEBI:15378"/>
        <dbReference type="ChEBI" id="CHEBI:29985"/>
        <dbReference type="ChEBI" id="CHEBI:30616"/>
        <dbReference type="ChEBI" id="CHEBI:43474"/>
        <dbReference type="ChEBI" id="CHEBI:58359"/>
        <dbReference type="ChEBI" id="CHEBI:147286"/>
        <dbReference type="ChEBI" id="CHEBI:147287"/>
        <dbReference type="ChEBI" id="CHEBI:456216"/>
        <dbReference type="EC" id="6.3.5.3"/>
    </reaction>
</comment>
<comment type="catalytic activity">
    <reaction evidence="1">
        <text>L-glutamine + H2O = L-glutamate + NH4(+)</text>
        <dbReference type="Rhea" id="RHEA:15889"/>
        <dbReference type="ChEBI" id="CHEBI:15377"/>
        <dbReference type="ChEBI" id="CHEBI:28938"/>
        <dbReference type="ChEBI" id="CHEBI:29985"/>
        <dbReference type="ChEBI" id="CHEBI:58359"/>
        <dbReference type="EC" id="3.5.1.2"/>
    </reaction>
</comment>
<comment type="pathway">
    <text evidence="1">Purine metabolism; IMP biosynthesis via de novo pathway; 5-amino-1-(5-phospho-D-ribosyl)imidazole from N(2)-formyl-N(1)-(5-phospho-D-ribosyl)glycinamide: step 1/2.</text>
</comment>
<comment type="subunit">
    <text evidence="1">Part of the FGAM synthase complex composed of 1 PurL, 1 PurQ and 2 PurS subunits.</text>
</comment>
<comment type="subcellular location">
    <subcellularLocation>
        <location evidence="1">Cytoplasm</location>
    </subcellularLocation>
</comment>
<feature type="chain" id="PRO_0000252717" description="Phosphoribosylformylglycinamidine synthase subunit PurQ">
    <location>
        <begin position="1"/>
        <end position="231"/>
    </location>
</feature>
<feature type="domain" description="Glutamine amidotransferase type-1" evidence="1">
    <location>
        <begin position="7"/>
        <end position="231"/>
    </location>
</feature>
<feature type="active site" description="Nucleophile" evidence="1">
    <location>
        <position position="89"/>
    </location>
</feature>
<feature type="active site" evidence="1">
    <location>
        <position position="206"/>
    </location>
</feature>
<feature type="active site" evidence="1">
    <location>
        <position position="208"/>
    </location>
</feature>
<protein>
    <recommendedName>
        <fullName evidence="1">Phosphoribosylformylglycinamidine synthase subunit PurQ</fullName>
        <shortName evidence="1">FGAM synthase</shortName>
        <ecNumber evidence="1">6.3.5.3</ecNumber>
    </recommendedName>
    <alternativeName>
        <fullName evidence="1">Formylglycinamide ribonucleotide amidotransferase subunit I</fullName>
        <shortName evidence="1">FGAR amidotransferase I</shortName>
        <shortName evidence="1">FGAR-AT I</shortName>
    </alternativeName>
    <alternativeName>
        <fullName evidence="1">Glutaminase PurQ</fullName>
        <ecNumber evidence="1">3.5.1.2</ecNumber>
    </alternativeName>
    <alternativeName>
        <fullName evidence="1">Phosphoribosylformylglycinamidine synthase subunit I</fullName>
    </alternativeName>
</protein>
<evidence type="ECO:0000255" key="1">
    <source>
        <dbReference type="HAMAP-Rule" id="MF_00421"/>
    </source>
</evidence>
<reference key="1">
    <citation type="submission" date="2005-08" db="EMBL/GenBank/DDBJ databases">
        <title>Complete sequence of Pelodictyon luteolum DSM 273.</title>
        <authorList>
            <consortium name="US DOE Joint Genome Institute"/>
            <person name="Copeland A."/>
            <person name="Lucas S."/>
            <person name="Lapidus A."/>
            <person name="Barry K."/>
            <person name="Detter J.C."/>
            <person name="Glavina T."/>
            <person name="Hammon N."/>
            <person name="Israni S."/>
            <person name="Pitluck S."/>
            <person name="Bryant D."/>
            <person name="Schmutz J."/>
            <person name="Larimer F."/>
            <person name="Land M."/>
            <person name="Kyrpides N."/>
            <person name="Ivanova N."/>
            <person name="Richardson P."/>
        </authorList>
    </citation>
    <scope>NUCLEOTIDE SEQUENCE [LARGE SCALE GENOMIC DNA]</scope>
    <source>
        <strain>DSM 273 / BCRC 81028 / 2530</strain>
    </source>
</reference>
<accession>Q3B397</accession>
<organism>
    <name type="scientific">Chlorobium luteolum (strain DSM 273 / BCRC 81028 / 2530)</name>
    <name type="common">Pelodictyon luteolum</name>
    <dbReference type="NCBI Taxonomy" id="319225"/>
    <lineage>
        <taxon>Bacteria</taxon>
        <taxon>Pseudomonadati</taxon>
        <taxon>Chlorobiota</taxon>
        <taxon>Chlorobiia</taxon>
        <taxon>Chlorobiales</taxon>
        <taxon>Chlorobiaceae</taxon>
        <taxon>Chlorobium/Pelodictyon group</taxon>
        <taxon>Pelodictyon</taxon>
    </lineage>
</organism>
<sequence length="231" mass="25172">MADITIGVVVFPGSNCDHDTMHAVASFEGVKPVMLWHGSHDLQGAKAIILPGGFSYGDYLRAGSIARFSPIMQEVVDAAGKGLPVLGICNGFQVLLESGLLDGALSRNRDKKFLCRDTYIRPVNSNTMFTGLYREDEVLSIPIAHGEGNYFAPPEVIESLEEHDQVVFRYTDREGHVSDEANPNGSVGNIAGIMNRNGNVLGLMPHPERASEKLLGSEDGRRLFASLFRQL</sequence>
<gene>
    <name evidence="1" type="primary">purQ</name>
    <name type="ordered locus">Plut_1325</name>
</gene>
<dbReference type="EC" id="6.3.5.3" evidence="1"/>
<dbReference type="EC" id="3.5.1.2" evidence="1"/>
<dbReference type="EMBL" id="CP000096">
    <property type="protein sequence ID" value="ABB24184.1"/>
    <property type="molecule type" value="Genomic_DNA"/>
</dbReference>
<dbReference type="RefSeq" id="WP_011358056.1">
    <property type="nucleotide sequence ID" value="NC_007512.1"/>
</dbReference>
<dbReference type="SMR" id="Q3B397"/>
<dbReference type="STRING" id="319225.Plut_1325"/>
<dbReference type="KEGG" id="plt:Plut_1325"/>
<dbReference type="eggNOG" id="COG0047">
    <property type="taxonomic scope" value="Bacteria"/>
</dbReference>
<dbReference type="HOGENOM" id="CLU_001031_3_1_10"/>
<dbReference type="OrthoDB" id="9804441at2"/>
<dbReference type="UniPathway" id="UPA00074">
    <property type="reaction ID" value="UER00128"/>
</dbReference>
<dbReference type="Proteomes" id="UP000002709">
    <property type="component" value="Chromosome"/>
</dbReference>
<dbReference type="GO" id="GO:0005737">
    <property type="term" value="C:cytoplasm"/>
    <property type="evidence" value="ECO:0007669"/>
    <property type="project" value="UniProtKB-SubCell"/>
</dbReference>
<dbReference type="GO" id="GO:0005524">
    <property type="term" value="F:ATP binding"/>
    <property type="evidence" value="ECO:0007669"/>
    <property type="project" value="UniProtKB-KW"/>
</dbReference>
<dbReference type="GO" id="GO:0004359">
    <property type="term" value="F:glutaminase activity"/>
    <property type="evidence" value="ECO:0007669"/>
    <property type="project" value="UniProtKB-EC"/>
</dbReference>
<dbReference type="GO" id="GO:0004642">
    <property type="term" value="F:phosphoribosylformylglycinamidine synthase activity"/>
    <property type="evidence" value="ECO:0007669"/>
    <property type="project" value="UniProtKB-UniRule"/>
</dbReference>
<dbReference type="GO" id="GO:0006189">
    <property type="term" value="P:'de novo' IMP biosynthetic process"/>
    <property type="evidence" value="ECO:0007669"/>
    <property type="project" value="UniProtKB-UniRule"/>
</dbReference>
<dbReference type="CDD" id="cd01740">
    <property type="entry name" value="GATase1_FGAR_AT"/>
    <property type="match status" value="1"/>
</dbReference>
<dbReference type="Gene3D" id="3.40.50.880">
    <property type="match status" value="1"/>
</dbReference>
<dbReference type="HAMAP" id="MF_00421">
    <property type="entry name" value="PurQ"/>
    <property type="match status" value="1"/>
</dbReference>
<dbReference type="InterPro" id="IPR029062">
    <property type="entry name" value="Class_I_gatase-like"/>
</dbReference>
<dbReference type="InterPro" id="IPR010075">
    <property type="entry name" value="PRibForGlyAmidine_synth_PurQ"/>
</dbReference>
<dbReference type="NCBIfam" id="TIGR01737">
    <property type="entry name" value="FGAM_synth_I"/>
    <property type="match status" value="1"/>
</dbReference>
<dbReference type="NCBIfam" id="NF002957">
    <property type="entry name" value="PRK03619.1"/>
    <property type="match status" value="1"/>
</dbReference>
<dbReference type="PANTHER" id="PTHR47552">
    <property type="entry name" value="PHOSPHORIBOSYLFORMYLGLYCINAMIDINE SYNTHASE SUBUNIT PURQ"/>
    <property type="match status" value="1"/>
</dbReference>
<dbReference type="PANTHER" id="PTHR47552:SF1">
    <property type="entry name" value="PHOSPHORIBOSYLFORMYLGLYCINAMIDINE SYNTHASE SUBUNIT PURQ"/>
    <property type="match status" value="1"/>
</dbReference>
<dbReference type="Pfam" id="PF13507">
    <property type="entry name" value="GATase_5"/>
    <property type="match status" value="1"/>
</dbReference>
<dbReference type="PIRSF" id="PIRSF001586">
    <property type="entry name" value="FGAM_synth_I"/>
    <property type="match status" value="1"/>
</dbReference>
<dbReference type="SMART" id="SM01211">
    <property type="entry name" value="GATase_5"/>
    <property type="match status" value="1"/>
</dbReference>
<dbReference type="SUPFAM" id="SSF52317">
    <property type="entry name" value="Class I glutamine amidotransferase-like"/>
    <property type="match status" value="1"/>
</dbReference>
<dbReference type="PROSITE" id="PS51273">
    <property type="entry name" value="GATASE_TYPE_1"/>
    <property type="match status" value="1"/>
</dbReference>
<name>PURQ_CHLL3</name>